<name>PSBA_MORIN</name>
<geneLocation type="chloroplast"/>
<sequence>MTAILERRESESLWGRFCNWITSTENRLYIGWFGVLMIPTLLTATSVFIIAFIAAPPVDIDGIREPVSGSLLYGNNIISGAIIPTSAAIGLHFYPIWEAASVDEWLYNGGPYELIVLHFLLGVACYMGREWELSFRLGMRPWIAVAYSAPVAAATAVFLIYPIGQGSFSDGMPLGISGTFNFMIVFQAEHNILMHPFHMLGVAGVFGGSLFSAMHGSLVTSSLIRETTENESANAGYRFGQEEETYNIVAAHGYFGRLIFQYASFNNSRSLHFFLAAWPVVGIWFTALGISTMAFNLNGFNFNQSVVDSQGRVINTWADIINRANLGMEVMHERNAHNFPLDLAGVEVPSTNG</sequence>
<protein>
    <recommendedName>
        <fullName evidence="1">Photosystem II protein D1</fullName>
        <shortName evidence="1">PSII D1 protein</shortName>
        <ecNumber evidence="1">1.10.3.9</ecNumber>
    </recommendedName>
    <alternativeName>
        <fullName evidence="1">Photosystem II Q(B) protein</fullName>
    </alternativeName>
</protein>
<comment type="function">
    <text evidence="1">Photosystem II (PSII) is a light-driven water:plastoquinone oxidoreductase that uses light energy to abstract electrons from H(2)O, generating O(2) and a proton gradient subsequently used for ATP formation. It consists of a core antenna complex that captures photons, and an electron transfer chain that converts photonic excitation into a charge separation. The D1/D2 (PsbA/PsbD) reaction center heterodimer binds P680, the primary electron donor of PSII as well as several subsequent electron acceptors.</text>
</comment>
<comment type="catalytic activity">
    <reaction evidence="1">
        <text>2 a plastoquinone + 4 hnu + 2 H2O = 2 a plastoquinol + O2</text>
        <dbReference type="Rhea" id="RHEA:36359"/>
        <dbReference type="Rhea" id="RHEA-COMP:9561"/>
        <dbReference type="Rhea" id="RHEA-COMP:9562"/>
        <dbReference type="ChEBI" id="CHEBI:15377"/>
        <dbReference type="ChEBI" id="CHEBI:15379"/>
        <dbReference type="ChEBI" id="CHEBI:17757"/>
        <dbReference type="ChEBI" id="CHEBI:30212"/>
        <dbReference type="ChEBI" id="CHEBI:62192"/>
        <dbReference type="EC" id="1.10.3.9"/>
    </reaction>
</comment>
<comment type="cofactor">
    <text evidence="1">The D1/D2 heterodimer binds P680, chlorophylls that are the primary electron donor of PSII, and subsequent electron acceptors. It shares a non-heme iron and each subunit binds pheophytin, quinone, additional chlorophylls, carotenoids and lipids. D1 provides most of the ligands for the Mn4-Ca-O5 cluster of the oxygen-evolving complex (OEC). There is also a Cl(-1) ion associated with D1 and D2, which is required for oxygen evolution. The PSII complex binds additional chlorophylls, carotenoids and specific lipids.</text>
</comment>
<comment type="subunit">
    <text evidence="1">PSII is composed of 1 copy each of membrane proteins PsbA, PsbB, PsbC, PsbD, PsbE, PsbF, PsbH, PsbI, PsbJ, PsbK, PsbL, PsbM, PsbT, PsbX, PsbY, PsbZ, Psb30/Ycf12, at least 3 peripheral proteins of the oxygen-evolving complex and a large number of cofactors. It forms dimeric complexes.</text>
</comment>
<comment type="subcellular location">
    <subcellularLocation>
        <location evidence="1">Plastid</location>
        <location evidence="1">Chloroplast thylakoid membrane</location>
        <topology evidence="1">Multi-pass membrane protein</topology>
    </subcellularLocation>
</comment>
<comment type="PTM">
    <text evidence="1">Tyr-161 forms a radical intermediate that is referred to as redox-active TyrZ, YZ or Y-Z.</text>
</comment>
<comment type="PTM">
    <text evidence="1">C-terminally processed by CTPA; processing is essential to allow assembly of the oxygen-evolving complex and thus photosynthetic growth.</text>
</comment>
<comment type="miscellaneous">
    <text evidence="1">2 of the reaction center chlorophylls (ChlD1 and ChlD2) are entirely coordinated by water.</text>
</comment>
<comment type="miscellaneous">
    <text evidence="1">Herbicides such as atrazine, BNT, diuron or ioxynil bind in the Q(B) binding site and block subsequent electron transfer.</text>
</comment>
<comment type="similarity">
    <text evidence="1">Belongs to the reaction center PufL/M/PsbA/D family.</text>
</comment>
<feature type="initiator methionine" description="Removed" evidence="1">
    <location>
        <position position="1"/>
    </location>
</feature>
<feature type="chain" id="PRO_0000340020" description="Photosystem II protein D1" evidence="1">
    <location>
        <begin position="2"/>
        <end position="344"/>
    </location>
</feature>
<feature type="propeptide" id="PRO_0000340021" evidence="1">
    <location>
        <begin position="345"/>
        <end position="353"/>
    </location>
</feature>
<feature type="transmembrane region" description="Helical" evidence="1">
    <location>
        <begin position="29"/>
        <end position="46"/>
    </location>
</feature>
<feature type="transmembrane region" description="Helical" evidence="1">
    <location>
        <begin position="118"/>
        <end position="133"/>
    </location>
</feature>
<feature type="transmembrane region" description="Helical" evidence="1">
    <location>
        <begin position="142"/>
        <end position="156"/>
    </location>
</feature>
<feature type="transmembrane region" description="Helical" evidence="1">
    <location>
        <begin position="197"/>
        <end position="218"/>
    </location>
</feature>
<feature type="transmembrane region" description="Helical" evidence="1">
    <location>
        <begin position="274"/>
        <end position="288"/>
    </location>
</feature>
<feature type="binding site" description="axial binding residue" evidence="1">
    <location>
        <position position="118"/>
    </location>
    <ligand>
        <name>chlorophyll a</name>
        <dbReference type="ChEBI" id="CHEBI:58416"/>
        <label>ChlzD1</label>
    </ligand>
    <ligandPart>
        <name>Mg</name>
        <dbReference type="ChEBI" id="CHEBI:25107"/>
    </ligandPart>
</feature>
<feature type="binding site" evidence="1">
    <location>
        <position position="126"/>
    </location>
    <ligand>
        <name>pheophytin a</name>
        <dbReference type="ChEBI" id="CHEBI:136840"/>
        <label>D1</label>
    </ligand>
</feature>
<feature type="binding site" evidence="1">
    <location>
        <position position="170"/>
    </location>
    <ligand>
        <name>[CaMn4O5] cluster</name>
        <dbReference type="ChEBI" id="CHEBI:189552"/>
    </ligand>
</feature>
<feature type="binding site" evidence="1">
    <location>
        <position position="189"/>
    </location>
    <ligand>
        <name>[CaMn4O5] cluster</name>
        <dbReference type="ChEBI" id="CHEBI:189552"/>
    </ligand>
</feature>
<feature type="binding site" description="axial binding residue" evidence="1">
    <location>
        <position position="198"/>
    </location>
    <ligand>
        <name>chlorophyll a</name>
        <dbReference type="ChEBI" id="CHEBI:58416"/>
        <label>PD1</label>
    </ligand>
    <ligandPart>
        <name>Mg</name>
        <dbReference type="ChEBI" id="CHEBI:25107"/>
    </ligandPart>
</feature>
<feature type="binding site" evidence="1">
    <location>
        <position position="215"/>
    </location>
    <ligand>
        <name>a quinone</name>
        <dbReference type="ChEBI" id="CHEBI:132124"/>
        <label>B</label>
    </ligand>
</feature>
<feature type="binding site" evidence="1">
    <location>
        <position position="215"/>
    </location>
    <ligand>
        <name>Fe cation</name>
        <dbReference type="ChEBI" id="CHEBI:24875"/>
        <note>ligand shared with heterodimeric partner</note>
    </ligand>
</feature>
<feature type="binding site" evidence="1">
    <location>
        <begin position="264"/>
        <end position="265"/>
    </location>
    <ligand>
        <name>a quinone</name>
        <dbReference type="ChEBI" id="CHEBI:132124"/>
        <label>B</label>
    </ligand>
</feature>
<feature type="binding site" evidence="1">
    <location>
        <position position="272"/>
    </location>
    <ligand>
        <name>Fe cation</name>
        <dbReference type="ChEBI" id="CHEBI:24875"/>
        <note>ligand shared with heterodimeric partner</note>
    </ligand>
</feature>
<feature type="binding site" evidence="1">
    <location>
        <position position="332"/>
    </location>
    <ligand>
        <name>[CaMn4O5] cluster</name>
        <dbReference type="ChEBI" id="CHEBI:189552"/>
    </ligand>
</feature>
<feature type="binding site" evidence="1">
    <location>
        <position position="333"/>
    </location>
    <ligand>
        <name>[CaMn4O5] cluster</name>
        <dbReference type="ChEBI" id="CHEBI:189552"/>
    </ligand>
</feature>
<feature type="binding site" evidence="1">
    <location>
        <position position="342"/>
    </location>
    <ligand>
        <name>[CaMn4O5] cluster</name>
        <dbReference type="ChEBI" id="CHEBI:189552"/>
    </ligand>
</feature>
<feature type="binding site" evidence="1">
    <location>
        <position position="344"/>
    </location>
    <ligand>
        <name>[CaMn4O5] cluster</name>
        <dbReference type="ChEBI" id="CHEBI:189552"/>
    </ligand>
</feature>
<feature type="site" description="Tyrosine radical intermediate" evidence="1">
    <location>
        <position position="161"/>
    </location>
</feature>
<feature type="site" description="Stabilizes free radical intermediate" evidence="1">
    <location>
        <position position="190"/>
    </location>
</feature>
<feature type="site" description="Cleavage; by CTPA" evidence="1">
    <location>
        <begin position="344"/>
        <end position="345"/>
    </location>
</feature>
<feature type="modified residue" description="N-acetylthreonine" evidence="1">
    <location>
        <position position="2"/>
    </location>
</feature>
<feature type="modified residue" description="Phosphothreonine" evidence="1">
    <location>
        <position position="2"/>
    </location>
</feature>
<evidence type="ECO:0000255" key="1">
    <source>
        <dbReference type="HAMAP-Rule" id="MF_01379"/>
    </source>
</evidence>
<reference key="1">
    <citation type="submission" date="2005-09" db="EMBL/GenBank/DDBJ databases">
        <title>The chloroplast genome of mulberry: structural features and comparative analysis.</title>
        <authorList>
            <person name="Ravi V."/>
            <person name="Khurana J.P."/>
            <person name="Tyagi A.K."/>
            <person name="Khurana P."/>
        </authorList>
    </citation>
    <scope>NUCLEOTIDE SEQUENCE [LARGE SCALE GENOMIC DNA]</scope>
    <source>
        <strain>cv. K2</strain>
    </source>
</reference>
<keyword id="KW-0007">Acetylation</keyword>
<keyword id="KW-0106">Calcium</keyword>
<keyword id="KW-0148">Chlorophyll</keyword>
<keyword id="KW-0150">Chloroplast</keyword>
<keyword id="KW-0157">Chromophore</keyword>
<keyword id="KW-0249">Electron transport</keyword>
<keyword id="KW-0359">Herbicide resistance</keyword>
<keyword id="KW-0408">Iron</keyword>
<keyword id="KW-0460">Magnesium</keyword>
<keyword id="KW-0464">Manganese</keyword>
<keyword id="KW-0472">Membrane</keyword>
<keyword id="KW-0479">Metal-binding</keyword>
<keyword id="KW-0560">Oxidoreductase</keyword>
<keyword id="KW-0597">Phosphoprotein</keyword>
<keyword id="KW-0602">Photosynthesis</keyword>
<keyword id="KW-0604">Photosystem II</keyword>
<keyword id="KW-0934">Plastid</keyword>
<keyword id="KW-0793">Thylakoid</keyword>
<keyword id="KW-0812">Transmembrane</keyword>
<keyword id="KW-1133">Transmembrane helix</keyword>
<keyword id="KW-0813">Transport</keyword>
<dbReference type="EC" id="1.10.3.9" evidence="1"/>
<dbReference type="EMBL" id="DQ226511">
    <property type="protein sequence ID" value="ABB20938.1"/>
    <property type="molecule type" value="Genomic_DNA"/>
</dbReference>
<dbReference type="RefSeq" id="YP_762241.1">
    <property type="nucleotide sequence ID" value="NC_008359.1"/>
</dbReference>
<dbReference type="SMR" id="Q09X37"/>
<dbReference type="GeneID" id="4290556"/>
<dbReference type="GO" id="GO:0009535">
    <property type="term" value="C:chloroplast thylakoid membrane"/>
    <property type="evidence" value="ECO:0007669"/>
    <property type="project" value="UniProtKB-SubCell"/>
</dbReference>
<dbReference type="GO" id="GO:0009523">
    <property type="term" value="C:photosystem II"/>
    <property type="evidence" value="ECO:0007669"/>
    <property type="project" value="UniProtKB-KW"/>
</dbReference>
<dbReference type="GO" id="GO:0016168">
    <property type="term" value="F:chlorophyll binding"/>
    <property type="evidence" value="ECO:0007669"/>
    <property type="project" value="UniProtKB-UniRule"/>
</dbReference>
<dbReference type="GO" id="GO:0045156">
    <property type="term" value="F:electron transporter, transferring electrons within the cyclic electron transport pathway of photosynthesis activity"/>
    <property type="evidence" value="ECO:0007669"/>
    <property type="project" value="InterPro"/>
</dbReference>
<dbReference type="GO" id="GO:0005506">
    <property type="term" value="F:iron ion binding"/>
    <property type="evidence" value="ECO:0007669"/>
    <property type="project" value="UniProtKB-UniRule"/>
</dbReference>
<dbReference type="GO" id="GO:0016682">
    <property type="term" value="F:oxidoreductase activity, acting on diphenols and related substances as donors, oxygen as acceptor"/>
    <property type="evidence" value="ECO:0007669"/>
    <property type="project" value="UniProtKB-UniRule"/>
</dbReference>
<dbReference type="GO" id="GO:0010242">
    <property type="term" value="F:oxygen evolving activity"/>
    <property type="evidence" value="ECO:0007669"/>
    <property type="project" value="UniProtKB-EC"/>
</dbReference>
<dbReference type="GO" id="GO:0009772">
    <property type="term" value="P:photosynthetic electron transport in photosystem II"/>
    <property type="evidence" value="ECO:0007669"/>
    <property type="project" value="InterPro"/>
</dbReference>
<dbReference type="GO" id="GO:0009635">
    <property type="term" value="P:response to herbicide"/>
    <property type="evidence" value="ECO:0007669"/>
    <property type="project" value="UniProtKB-KW"/>
</dbReference>
<dbReference type="CDD" id="cd09289">
    <property type="entry name" value="Photosystem-II_D1"/>
    <property type="match status" value="1"/>
</dbReference>
<dbReference type="FunFam" id="1.20.85.10:FF:000002">
    <property type="entry name" value="Photosystem II protein D1"/>
    <property type="match status" value="1"/>
</dbReference>
<dbReference type="Gene3D" id="1.20.85.10">
    <property type="entry name" value="Photosystem II protein D1-like"/>
    <property type="match status" value="1"/>
</dbReference>
<dbReference type="HAMAP" id="MF_01379">
    <property type="entry name" value="PSII_PsbA_D1"/>
    <property type="match status" value="1"/>
</dbReference>
<dbReference type="InterPro" id="IPR055266">
    <property type="entry name" value="D1/D2"/>
</dbReference>
<dbReference type="InterPro" id="IPR036854">
    <property type="entry name" value="Photo_II_D1/D2_sf"/>
</dbReference>
<dbReference type="InterPro" id="IPR000484">
    <property type="entry name" value="Photo_RC_L/M"/>
</dbReference>
<dbReference type="InterPro" id="IPR055265">
    <property type="entry name" value="Photo_RC_L/M_CS"/>
</dbReference>
<dbReference type="InterPro" id="IPR005867">
    <property type="entry name" value="PSII_D1"/>
</dbReference>
<dbReference type="NCBIfam" id="TIGR01151">
    <property type="entry name" value="psbA"/>
    <property type="match status" value="1"/>
</dbReference>
<dbReference type="PANTHER" id="PTHR33149">
    <property type="entry name" value="PHOTOSYSTEM II PROTEIN D1"/>
    <property type="match status" value="1"/>
</dbReference>
<dbReference type="PANTHER" id="PTHR33149:SF55">
    <property type="entry name" value="PHOTOSYSTEM II PROTEIN D1"/>
    <property type="match status" value="1"/>
</dbReference>
<dbReference type="Pfam" id="PF00124">
    <property type="entry name" value="Photo_RC"/>
    <property type="match status" value="1"/>
</dbReference>
<dbReference type="PRINTS" id="PR00256">
    <property type="entry name" value="REACTNCENTRE"/>
</dbReference>
<dbReference type="SUPFAM" id="SSF81483">
    <property type="entry name" value="Bacterial photosystem II reaction centre, L and M subunits"/>
    <property type="match status" value="1"/>
</dbReference>
<dbReference type="PROSITE" id="PS00244">
    <property type="entry name" value="REACTION_CENTER"/>
    <property type="match status" value="1"/>
</dbReference>
<gene>
    <name evidence="1" type="primary">psbA</name>
    <name type="ordered locus">MoinCp001</name>
</gene>
<proteinExistence type="inferred from homology"/>
<organism>
    <name type="scientific">Morus indica</name>
    <name type="common">Mulberry</name>
    <dbReference type="NCBI Taxonomy" id="248361"/>
    <lineage>
        <taxon>Eukaryota</taxon>
        <taxon>Viridiplantae</taxon>
        <taxon>Streptophyta</taxon>
        <taxon>Embryophyta</taxon>
        <taxon>Tracheophyta</taxon>
        <taxon>Spermatophyta</taxon>
        <taxon>Magnoliopsida</taxon>
        <taxon>eudicotyledons</taxon>
        <taxon>Gunneridae</taxon>
        <taxon>Pentapetalae</taxon>
        <taxon>rosids</taxon>
        <taxon>fabids</taxon>
        <taxon>Rosales</taxon>
        <taxon>Moraceae</taxon>
        <taxon>Moreae</taxon>
        <taxon>Morus</taxon>
    </lineage>
</organism>
<accession>Q09X37</accession>